<sequence>MDFKDTLLMPKTDFPMRGNLPNREPDIQKKWEEEDIYRLVQERTKDRPKFVLHDGPPYANGDIHMGHALNKILKDFIVRYKSMSGYNAPYVPGWDTHGLPIETALTKNKKVNRKEMSVAEFRKLCEEYAWKQIEGQREQFKRLGVRGDWENPYVTLKPEYEAQQIRVFGEMAKRGYIYKGLKPVNWSPSSESALAEAEIEYQDKRSASIYVAFGVKDGKGVLENGERIIIWTTTPWTIPANLGISVHPDLEYSVIAVGEDRFVVASALVENVASACGFDQYEVTRTVKGKDLENIIAEHPLYGRDSLVMLGEHVTTDAGTGCVHTAPGHGEDDFIIGQKYGLDVLCPVDEKGVMTSEAPGFEGMFYDDANKAITQQLDEKGALVKLEFITHSYPHDWRTKKPTIFRATAQWFASIKDFRSDLLDAIKETKWVPEWGEQRLHNMVRDRGDWCISRQRAWGVPIPVFYAENGEPVITDETIEHVSELFRQHGSNIWFEKEAKDLLPEGFTHPGSPNGTFTKEQDIMDVWFDSGSSHQAVLEERDDLVRPADLYLEGSDQYRGWFNSSLSTAVAVTGKAPYKGVLSHGFALDGEGRKMSKSIGNVVVPAKVMKQLGADILRLWVSSVDYQADVRVSDAILKQVAEVYRKIRNTFRFLHGNLFDFDPKTNAVAVEDLREVDQYMLIKLNKLIDKVKKAYDEYEFAVVYHSIHNFCTIELSSFYLDFAKDIVYIEHADHPDRRSMQTVFYETLLALVKLSAPILPHTADELWSHLTFVEEQSVQLTDMPETITVPNSEATEEKFDRFMALRDDVLKALETARNEKIIGKSLEANLKLYPNKENKELLASIKENLSQLFIVSELTISEENEAPNDAQSFATGKIAVEKAEGEMCERSRVISKDVGANPKYPTLSLRNAEIVEKYYQK</sequence>
<reference key="1">
    <citation type="journal article" date="1997" name="Nature">
        <title>The complete genome sequence of the Gram-positive bacterium Bacillus subtilis.</title>
        <authorList>
            <person name="Kunst F."/>
            <person name="Ogasawara N."/>
            <person name="Moszer I."/>
            <person name="Albertini A.M."/>
            <person name="Alloni G."/>
            <person name="Azevedo V."/>
            <person name="Bertero M.G."/>
            <person name="Bessieres P."/>
            <person name="Bolotin A."/>
            <person name="Borchert S."/>
            <person name="Borriss R."/>
            <person name="Boursier L."/>
            <person name="Brans A."/>
            <person name="Braun M."/>
            <person name="Brignell S.C."/>
            <person name="Bron S."/>
            <person name="Brouillet S."/>
            <person name="Bruschi C.V."/>
            <person name="Caldwell B."/>
            <person name="Capuano V."/>
            <person name="Carter N.M."/>
            <person name="Choi S.-K."/>
            <person name="Codani J.-J."/>
            <person name="Connerton I.F."/>
            <person name="Cummings N.J."/>
            <person name="Daniel R.A."/>
            <person name="Denizot F."/>
            <person name="Devine K.M."/>
            <person name="Duesterhoeft A."/>
            <person name="Ehrlich S.D."/>
            <person name="Emmerson P.T."/>
            <person name="Entian K.-D."/>
            <person name="Errington J."/>
            <person name="Fabret C."/>
            <person name="Ferrari E."/>
            <person name="Foulger D."/>
            <person name="Fritz C."/>
            <person name="Fujita M."/>
            <person name="Fujita Y."/>
            <person name="Fuma S."/>
            <person name="Galizzi A."/>
            <person name="Galleron N."/>
            <person name="Ghim S.-Y."/>
            <person name="Glaser P."/>
            <person name="Goffeau A."/>
            <person name="Golightly E.J."/>
            <person name="Grandi G."/>
            <person name="Guiseppi G."/>
            <person name="Guy B.J."/>
            <person name="Haga K."/>
            <person name="Haiech J."/>
            <person name="Harwood C.R."/>
            <person name="Henaut A."/>
            <person name="Hilbert H."/>
            <person name="Holsappel S."/>
            <person name="Hosono S."/>
            <person name="Hullo M.-F."/>
            <person name="Itaya M."/>
            <person name="Jones L.-M."/>
            <person name="Joris B."/>
            <person name="Karamata D."/>
            <person name="Kasahara Y."/>
            <person name="Klaerr-Blanchard M."/>
            <person name="Klein C."/>
            <person name="Kobayashi Y."/>
            <person name="Koetter P."/>
            <person name="Koningstein G."/>
            <person name="Krogh S."/>
            <person name="Kumano M."/>
            <person name="Kurita K."/>
            <person name="Lapidus A."/>
            <person name="Lardinois S."/>
            <person name="Lauber J."/>
            <person name="Lazarevic V."/>
            <person name="Lee S.-M."/>
            <person name="Levine A."/>
            <person name="Liu H."/>
            <person name="Masuda S."/>
            <person name="Mauel C."/>
            <person name="Medigue C."/>
            <person name="Medina N."/>
            <person name="Mellado R.P."/>
            <person name="Mizuno M."/>
            <person name="Moestl D."/>
            <person name="Nakai S."/>
            <person name="Noback M."/>
            <person name="Noone D."/>
            <person name="O'Reilly M."/>
            <person name="Ogawa K."/>
            <person name="Ogiwara A."/>
            <person name="Oudega B."/>
            <person name="Park S.-H."/>
            <person name="Parro V."/>
            <person name="Pohl T.M."/>
            <person name="Portetelle D."/>
            <person name="Porwollik S."/>
            <person name="Prescott A.M."/>
            <person name="Presecan E."/>
            <person name="Pujic P."/>
            <person name="Purnelle B."/>
            <person name="Rapoport G."/>
            <person name="Rey M."/>
            <person name="Reynolds S."/>
            <person name="Rieger M."/>
            <person name="Rivolta C."/>
            <person name="Rocha E."/>
            <person name="Roche B."/>
            <person name="Rose M."/>
            <person name="Sadaie Y."/>
            <person name="Sato T."/>
            <person name="Scanlan E."/>
            <person name="Schleich S."/>
            <person name="Schroeter R."/>
            <person name="Scoffone F."/>
            <person name="Sekiguchi J."/>
            <person name="Sekowska A."/>
            <person name="Seror S.J."/>
            <person name="Serror P."/>
            <person name="Shin B.-S."/>
            <person name="Soldo B."/>
            <person name="Sorokin A."/>
            <person name="Tacconi E."/>
            <person name="Takagi T."/>
            <person name="Takahashi H."/>
            <person name="Takemaru K."/>
            <person name="Takeuchi M."/>
            <person name="Tamakoshi A."/>
            <person name="Tanaka T."/>
            <person name="Terpstra P."/>
            <person name="Tognoni A."/>
            <person name="Tosato V."/>
            <person name="Uchiyama S."/>
            <person name="Vandenbol M."/>
            <person name="Vannier F."/>
            <person name="Vassarotti A."/>
            <person name="Viari A."/>
            <person name="Wambutt R."/>
            <person name="Wedler E."/>
            <person name="Wedler H."/>
            <person name="Weitzenegger T."/>
            <person name="Winters P."/>
            <person name="Wipat A."/>
            <person name="Yamamoto H."/>
            <person name="Yamane K."/>
            <person name="Yasumoto K."/>
            <person name="Yata K."/>
            <person name="Yoshida K."/>
            <person name="Yoshikawa H.-F."/>
            <person name="Zumstein E."/>
            <person name="Yoshikawa H."/>
            <person name="Danchin A."/>
        </authorList>
    </citation>
    <scope>NUCLEOTIDE SEQUENCE [LARGE SCALE GENOMIC DNA]</scope>
    <source>
        <strain>168</strain>
    </source>
</reference>
<reference key="2">
    <citation type="journal article" date="2009" name="Microbiology">
        <title>From a consortium sequence to a unified sequence: the Bacillus subtilis 168 reference genome a decade later.</title>
        <authorList>
            <person name="Barbe V."/>
            <person name="Cruveiller S."/>
            <person name="Kunst F."/>
            <person name="Lenoble P."/>
            <person name="Meurice G."/>
            <person name="Sekowska A."/>
            <person name="Vallenet D."/>
            <person name="Wang T."/>
            <person name="Moszer I."/>
            <person name="Medigue C."/>
            <person name="Danchin A."/>
        </authorList>
    </citation>
    <scope>SEQUENCE REVISION TO 744</scope>
</reference>
<reference key="3">
    <citation type="submission" date="1996-09" db="EMBL/GenBank/DDBJ databases">
        <authorList>
            <person name="Stewart G.C."/>
            <person name="Cha J.H."/>
        </authorList>
    </citation>
    <scope>NUCLEOTIDE SEQUENCE [GENOMIC DNA] OF 1-121</scope>
    <source>
        <strain>168</strain>
    </source>
</reference>
<reference key="4">
    <citation type="submission" date="1996-02" db="EMBL/GenBank/DDBJ databases">
        <authorList>
            <person name="Pragai Z."/>
            <person name="Tjalsma H."/>
            <person name="Bolhuis A."/>
            <person name="van Dijl J.M."/>
            <person name="Venema G."/>
            <person name="Bron S."/>
        </authorList>
    </citation>
    <scope>NUCLEOTIDE SEQUENCE [GENOMIC DNA] OF 733-921</scope>
    <source>
        <strain>168</strain>
    </source>
</reference>
<dbReference type="EC" id="6.1.1.5" evidence="1"/>
<dbReference type="EMBL" id="AL009126">
    <property type="protein sequence ID" value="CAB13417.2"/>
    <property type="molecule type" value="Genomic_DNA"/>
</dbReference>
<dbReference type="EMBL" id="U60901">
    <property type="protein sequence ID" value="AAB49280.1"/>
    <property type="molecule type" value="Genomic_DNA"/>
</dbReference>
<dbReference type="EMBL" id="U48870">
    <property type="protein sequence ID" value="AAB57764.1"/>
    <property type="molecule type" value="Genomic_DNA"/>
</dbReference>
<dbReference type="PIR" id="H69643">
    <property type="entry name" value="H69643"/>
</dbReference>
<dbReference type="RefSeq" id="NP_389426.2">
    <property type="nucleotide sequence ID" value="NC_000964.3"/>
</dbReference>
<dbReference type="RefSeq" id="WP_003245512.1">
    <property type="nucleotide sequence ID" value="NZ_OZ025638.1"/>
</dbReference>
<dbReference type="SMR" id="Q45477"/>
<dbReference type="FunCoup" id="Q45477">
    <property type="interactions" value="684"/>
</dbReference>
<dbReference type="IntAct" id="Q45477">
    <property type="interactions" value="1"/>
</dbReference>
<dbReference type="MINT" id="Q45477"/>
<dbReference type="STRING" id="224308.BSU15430"/>
<dbReference type="jPOST" id="Q45477"/>
<dbReference type="PaxDb" id="224308-BSU15430"/>
<dbReference type="EnsemblBacteria" id="CAB13417">
    <property type="protein sequence ID" value="CAB13417"/>
    <property type="gene ID" value="BSU_15430"/>
</dbReference>
<dbReference type="GeneID" id="940119"/>
<dbReference type="KEGG" id="bsu:BSU15430"/>
<dbReference type="PATRIC" id="fig|224308.179.peg.1682"/>
<dbReference type="eggNOG" id="COG0060">
    <property type="taxonomic scope" value="Bacteria"/>
</dbReference>
<dbReference type="InParanoid" id="Q45477"/>
<dbReference type="OrthoDB" id="9810365at2"/>
<dbReference type="PhylomeDB" id="Q45477"/>
<dbReference type="BioCyc" id="BSUB:BSU15430-MONOMER"/>
<dbReference type="BRENDA" id="6.1.1.5">
    <property type="organism ID" value="658"/>
</dbReference>
<dbReference type="SABIO-RK" id="Q45477"/>
<dbReference type="Proteomes" id="UP000001570">
    <property type="component" value="Chromosome"/>
</dbReference>
<dbReference type="GO" id="GO:0005829">
    <property type="term" value="C:cytosol"/>
    <property type="evidence" value="ECO:0000318"/>
    <property type="project" value="GO_Central"/>
</dbReference>
<dbReference type="GO" id="GO:0002161">
    <property type="term" value="F:aminoacyl-tRNA deacylase activity"/>
    <property type="evidence" value="ECO:0007669"/>
    <property type="project" value="InterPro"/>
</dbReference>
<dbReference type="GO" id="GO:0005524">
    <property type="term" value="F:ATP binding"/>
    <property type="evidence" value="ECO:0007669"/>
    <property type="project" value="UniProtKB-UniRule"/>
</dbReference>
<dbReference type="GO" id="GO:0004822">
    <property type="term" value="F:isoleucine-tRNA ligase activity"/>
    <property type="evidence" value="ECO:0000318"/>
    <property type="project" value="GO_Central"/>
</dbReference>
<dbReference type="GO" id="GO:0000049">
    <property type="term" value="F:tRNA binding"/>
    <property type="evidence" value="ECO:0007669"/>
    <property type="project" value="InterPro"/>
</dbReference>
<dbReference type="GO" id="GO:0006428">
    <property type="term" value="P:isoleucyl-tRNA aminoacylation"/>
    <property type="evidence" value="ECO:0000318"/>
    <property type="project" value="GO_Central"/>
</dbReference>
<dbReference type="CDD" id="cd07960">
    <property type="entry name" value="Anticodon_Ia_Ile_BEm"/>
    <property type="match status" value="1"/>
</dbReference>
<dbReference type="CDD" id="cd00818">
    <property type="entry name" value="IleRS_core"/>
    <property type="match status" value="1"/>
</dbReference>
<dbReference type="FunFam" id="1.10.10.830:FF:000001">
    <property type="entry name" value="Isoleucine--tRNA ligase"/>
    <property type="match status" value="1"/>
</dbReference>
<dbReference type="FunFam" id="1.10.730.20:FF:000001">
    <property type="entry name" value="Isoleucine--tRNA ligase"/>
    <property type="match status" value="1"/>
</dbReference>
<dbReference type="FunFam" id="3.40.50.620:FF:000152">
    <property type="entry name" value="Isoleucine--tRNA ligase"/>
    <property type="match status" value="1"/>
</dbReference>
<dbReference type="FunFam" id="3.40.50.620:FF:000305">
    <property type="entry name" value="Isoleucine--tRNA ligase"/>
    <property type="match status" value="1"/>
</dbReference>
<dbReference type="FunFam" id="3.90.740.10:FF:000006">
    <property type="entry name" value="Isoleucine--tRNA ligase"/>
    <property type="match status" value="1"/>
</dbReference>
<dbReference type="Gene3D" id="1.10.730.20">
    <property type="match status" value="1"/>
</dbReference>
<dbReference type="Gene3D" id="3.40.50.620">
    <property type="entry name" value="HUPs"/>
    <property type="match status" value="2"/>
</dbReference>
<dbReference type="Gene3D" id="1.10.10.830">
    <property type="entry name" value="Ile-tRNA synthetase CP2 domain-like"/>
    <property type="match status" value="1"/>
</dbReference>
<dbReference type="HAMAP" id="MF_02002">
    <property type="entry name" value="Ile_tRNA_synth_type1"/>
    <property type="match status" value="1"/>
</dbReference>
<dbReference type="InterPro" id="IPR001412">
    <property type="entry name" value="aa-tRNA-synth_I_CS"/>
</dbReference>
<dbReference type="InterPro" id="IPR002300">
    <property type="entry name" value="aa-tRNA-synth_Ia"/>
</dbReference>
<dbReference type="InterPro" id="IPR033708">
    <property type="entry name" value="Anticodon_Ile_BEm"/>
</dbReference>
<dbReference type="InterPro" id="IPR002301">
    <property type="entry name" value="Ile-tRNA-ligase"/>
</dbReference>
<dbReference type="InterPro" id="IPR023585">
    <property type="entry name" value="Ile-tRNA-ligase_type1"/>
</dbReference>
<dbReference type="InterPro" id="IPR050081">
    <property type="entry name" value="Ile-tRNA_ligase"/>
</dbReference>
<dbReference type="InterPro" id="IPR013155">
    <property type="entry name" value="M/V/L/I-tRNA-synth_anticd-bd"/>
</dbReference>
<dbReference type="InterPro" id="IPR014729">
    <property type="entry name" value="Rossmann-like_a/b/a_fold"/>
</dbReference>
<dbReference type="InterPro" id="IPR009080">
    <property type="entry name" value="tRNAsynth_Ia_anticodon-bd"/>
</dbReference>
<dbReference type="InterPro" id="IPR009008">
    <property type="entry name" value="Val/Leu/Ile-tRNA-synth_edit"/>
</dbReference>
<dbReference type="NCBIfam" id="TIGR00392">
    <property type="entry name" value="ileS"/>
    <property type="match status" value="1"/>
</dbReference>
<dbReference type="PANTHER" id="PTHR42765:SF1">
    <property type="entry name" value="ISOLEUCINE--TRNA LIGASE, MITOCHONDRIAL"/>
    <property type="match status" value="1"/>
</dbReference>
<dbReference type="PANTHER" id="PTHR42765">
    <property type="entry name" value="SOLEUCYL-TRNA SYNTHETASE"/>
    <property type="match status" value="1"/>
</dbReference>
<dbReference type="Pfam" id="PF08264">
    <property type="entry name" value="Anticodon_1"/>
    <property type="match status" value="1"/>
</dbReference>
<dbReference type="Pfam" id="PF00133">
    <property type="entry name" value="tRNA-synt_1"/>
    <property type="match status" value="1"/>
</dbReference>
<dbReference type="PRINTS" id="PR00984">
    <property type="entry name" value="TRNASYNTHILE"/>
</dbReference>
<dbReference type="SUPFAM" id="SSF47323">
    <property type="entry name" value="Anticodon-binding domain of a subclass of class I aminoacyl-tRNA synthetases"/>
    <property type="match status" value="1"/>
</dbReference>
<dbReference type="SUPFAM" id="SSF52374">
    <property type="entry name" value="Nucleotidylyl transferase"/>
    <property type="match status" value="1"/>
</dbReference>
<dbReference type="SUPFAM" id="SSF50677">
    <property type="entry name" value="ValRS/IleRS/LeuRS editing domain"/>
    <property type="match status" value="1"/>
</dbReference>
<dbReference type="PROSITE" id="PS00178">
    <property type="entry name" value="AA_TRNA_LIGASE_I"/>
    <property type="match status" value="1"/>
</dbReference>
<evidence type="ECO:0000255" key="1">
    <source>
        <dbReference type="HAMAP-Rule" id="MF_02002"/>
    </source>
</evidence>
<protein>
    <recommendedName>
        <fullName evidence="1">Isoleucine--tRNA ligase</fullName>
        <ecNumber evidence="1">6.1.1.5</ecNumber>
    </recommendedName>
    <alternativeName>
        <fullName evidence="1">Isoleucyl-tRNA synthetase</fullName>
        <shortName evidence="1">IleRS</shortName>
    </alternativeName>
</protein>
<gene>
    <name evidence="1" type="primary">ileS</name>
    <name type="ordered locus">BSU15430</name>
</gene>
<feature type="chain" id="PRO_0000098351" description="Isoleucine--tRNA ligase">
    <location>
        <begin position="1"/>
        <end position="921"/>
    </location>
</feature>
<feature type="short sequence motif" description="'HIGH' region">
    <location>
        <begin position="57"/>
        <end position="67"/>
    </location>
</feature>
<feature type="short sequence motif" description="'KMSKS' region">
    <location>
        <begin position="594"/>
        <end position="598"/>
    </location>
</feature>
<feature type="binding site" evidence="1">
    <location>
        <position position="553"/>
    </location>
    <ligand>
        <name>L-isoleucyl-5'-AMP</name>
        <dbReference type="ChEBI" id="CHEBI:178002"/>
    </ligand>
</feature>
<feature type="binding site" evidence="1">
    <location>
        <position position="597"/>
    </location>
    <ligand>
        <name>ATP</name>
        <dbReference type="ChEBI" id="CHEBI:30616"/>
    </ligand>
</feature>
<proteinExistence type="inferred from homology"/>
<accession>Q45477</accession>
<accession>O31730</accession>
<accession>P71022</accession>
<comment type="function">
    <text evidence="1">Catalyzes the attachment of isoleucine to tRNA(Ile). As IleRS can inadvertently accommodate and process structurally similar amino acids such as valine, to avoid such errors it has two additional distinct tRNA(Ile)-dependent editing activities. One activity is designated as 'pretransfer' editing and involves the hydrolysis of activated Val-AMP. The other activity is designated 'posttransfer' editing and involves deacylation of mischarged Val-tRNA(Ile).</text>
</comment>
<comment type="catalytic activity">
    <reaction evidence="1">
        <text>tRNA(Ile) + L-isoleucine + ATP = L-isoleucyl-tRNA(Ile) + AMP + diphosphate</text>
        <dbReference type="Rhea" id="RHEA:11060"/>
        <dbReference type="Rhea" id="RHEA-COMP:9666"/>
        <dbReference type="Rhea" id="RHEA-COMP:9695"/>
        <dbReference type="ChEBI" id="CHEBI:30616"/>
        <dbReference type="ChEBI" id="CHEBI:33019"/>
        <dbReference type="ChEBI" id="CHEBI:58045"/>
        <dbReference type="ChEBI" id="CHEBI:78442"/>
        <dbReference type="ChEBI" id="CHEBI:78528"/>
        <dbReference type="ChEBI" id="CHEBI:456215"/>
        <dbReference type="EC" id="6.1.1.5"/>
    </reaction>
</comment>
<comment type="subunit">
    <text evidence="1">Monomer.</text>
</comment>
<comment type="subcellular location">
    <subcellularLocation>
        <location evidence="1">Cytoplasm</location>
    </subcellularLocation>
</comment>
<comment type="domain">
    <text evidence="1">IleRS has two distinct active sites: one for aminoacylation and one for editing. The misactivated valine is translocated from the active site to the editing site, which sterically excludes the correctly activated isoleucine. The single editing site contains two valyl binding pockets, one specific for each substrate (Val-AMP or Val-tRNA(Ile)).</text>
</comment>
<comment type="similarity">
    <text evidence="1">Belongs to the class-I aminoacyl-tRNA synthetase family. IleS type 1 subfamily.</text>
</comment>
<keyword id="KW-0030">Aminoacyl-tRNA synthetase</keyword>
<keyword id="KW-0067">ATP-binding</keyword>
<keyword id="KW-0963">Cytoplasm</keyword>
<keyword id="KW-0436">Ligase</keyword>
<keyword id="KW-0547">Nucleotide-binding</keyword>
<keyword id="KW-0648">Protein biosynthesis</keyword>
<keyword id="KW-1185">Reference proteome</keyword>
<name>SYI_BACSU</name>
<organism>
    <name type="scientific">Bacillus subtilis (strain 168)</name>
    <dbReference type="NCBI Taxonomy" id="224308"/>
    <lineage>
        <taxon>Bacteria</taxon>
        <taxon>Bacillati</taxon>
        <taxon>Bacillota</taxon>
        <taxon>Bacilli</taxon>
        <taxon>Bacillales</taxon>
        <taxon>Bacillaceae</taxon>
        <taxon>Bacillus</taxon>
    </lineage>
</organism>